<accession>Q6GFT9</accession>
<dbReference type="EMBL" id="BX571856">
    <property type="protein sequence ID" value="CAG40838.1"/>
    <property type="molecule type" value="Genomic_DNA"/>
</dbReference>
<dbReference type="PDB" id="4Q77">
    <property type="method" value="X-ray"/>
    <property type="resolution" value="1.77 A"/>
    <property type="chains" value="A/B=34-166"/>
</dbReference>
<dbReference type="PDBsum" id="4Q77"/>
<dbReference type="SMR" id="Q6GFT9"/>
<dbReference type="KEGG" id="sar:SAR1847"/>
<dbReference type="HOGENOM" id="CLU_132118_0_0_9"/>
<dbReference type="EvolutionaryTrace" id="Q6GFT9"/>
<dbReference type="PRO" id="PR:Q6GFT9"/>
<dbReference type="Proteomes" id="UP000000596">
    <property type="component" value="Chromosome"/>
</dbReference>
<dbReference type="GO" id="GO:0003677">
    <property type="term" value="F:DNA binding"/>
    <property type="evidence" value="ECO:0007669"/>
    <property type="project" value="UniProtKB-KW"/>
</dbReference>
<dbReference type="GO" id="GO:0003700">
    <property type="term" value="F:DNA-binding transcription factor activity"/>
    <property type="evidence" value="ECO:0007669"/>
    <property type="project" value="InterPro"/>
</dbReference>
<dbReference type="GO" id="GO:0006950">
    <property type="term" value="P:response to stress"/>
    <property type="evidence" value="ECO:0007669"/>
    <property type="project" value="TreeGrafter"/>
</dbReference>
<dbReference type="FunFam" id="1.10.10.10:FF:000715">
    <property type="entry name" value="HTH-type transcriptional regulator rot"/>
    <property type="match status" value="1"/>
</dbReference>
<dbReference type="Gene3D" id="1.10.10.10">
    <property type="entry name" value="Winged helix-like DNA-binding domain superfamily/Winged helix DNA-binding domain"/>
    <property type="match status" value="1"/>
</dbReference>
<dbReference type="InterPro" id="IPR000835">
    <property type="entry name" value="HTH_MarR-typ"/>
</dbReference>
<dbReference type="InterPro" id="IPR039422">
    <property type="entry name" value="MarR/SlyA-like"/>
</dbReference>
<dbReference type="InterPro" id="IPR016998">
    <property type="entry name" value="Rot"/>
</dbReference>
<dbReference type="InterPro" id="IPR010166">
    <property type="entry name" value="SarA/Rot_dom"/>
</dbReference>
<dbReference type="InterPro" id="IPR055166">
    <property type="entry name" value="Transc_reg_Sar_Rot_HTH"/>
</dbReference>
<dbReference type="InterPro" id="IPR036388">
    <property type="entry name" value="WH-like_DNA-bd_sf"/>
</dbReference>
<dbReference type="InterPro" id="IPR036390">
    <property type="entry name" value="WH_DNA-bd_sf"/>
</dbReference>
<dbReference type="NCBIfam" id="TIGR01889">
    <property type="entry name" value="Staph_reg_Sar"/>
    <property type="match status" value="1"/>
</dbReference>
<dbReference type="PANTHER" id="PTHR33164:SF56">
    <property type="entry name" value="HTH-TYPE TRANSCRIPTIONAL REGULATOR MHQR"/>
    <property type="match status" value="1"/>
</dbReference>
<dbReference type="PANTHER" id="PTHR33164">
    <property type="entry name" value="TRANSCRIPTIONAL REGULATOR, MARR FAMILY"/>
    <property type="match status" value="1"/>
</dbReference>
<dbReference type="Pfam" id="PF22381">
    <property type="entry name" value="Staph_reg_Sar_Rot"/>
    <property type="match status" value="1"/>
</dbReference>
<dbReference type="PIRSF" id="PIRSF032474">
    <property type="entry name" value="TF_HTH_Rot"/>
    <property type="match status" value="1"/>
</dbReference>
<dbReference type="SMART" id="SM00347">
    <property type="entry name" value="HTH_MARR"/>
    <property type="match status" value="1"/>
</dbReference>
<dbReference type="SUPFAM" id="SSF46785">
    <property type="entry name" value="Winged helix' DNA-binding domain"/>
    <property type="match status" value="1"/>
</dbReference>
<sequence>MHKLAHISFGIVGMFVNTCMVAKYVIINWEMYSMKKVNNDTVFGILQLETLLGDINSIFSEIESEYKMSREEILILLTLWQKGSMTLKEMDRFVEVKPYKRTRTYNNLVELEWIYKERPVDDERTVIIHFNEKLQQEKVELLNFISDAIASRATAMQNSLNAIIAV</sequence>
<protein>
    <recommendedName>
        <fullName>HTH-type transcriptional regulator rot</fullName>
    </recommendedName>
    <alternativeName>
        <fullName>Repressor of toxins</fullName>
    </alternativeName>
</protein>
<evidence type="ECO:0000250" key="1"/>
<evidence type="ECO:0000255" key="2"/>
<evidence type="ECO:0000305" key="3"/>
<evidence type="ECO:0007829" key="4">
    <source>
        <dbReference type="PDB" id="4Q77"/>
    </source>
</evidence>
<feature type="chain" id="PRO_0000220547" description="HTH-type transcriptional regulator rot">
    <location>
        <begin position="1"/>
        <end position="166"/>
    </location>
</feature>
<feature type="DNA-binding region" description="H-T-H motif" evidence="2">
    <location>
        <begin position="87"/>
        <end position="110"/>
    </location>
</feature>
<feature type="helix" evidence="4">
    <location>
        <begin position="41"/>
        <end position="66"/>
    </location>
</feature>
<feature type="helix" evidence="4">
    <location>
        <begin position="70"/>
        <end position="82"/>
    </location>
</feature>
<feature type="strand" evidence="4">
    <location>
        <begin position="84"/>
        <end position="86"/>
    </location>
</feature>
<feature type="helix" evidence="4">
    <location>
        <begin position="87"/>
        <end position="93"/>
    </location>
</feature>
<feature type="helix" evidence="4">
    <location>
        <begin position="98"/>
        <end position="100"/>
    </location>
</feature>
<feature type="helix" evidence="4">
    <location>
        <begin position="101"/>
        <end position="110"/>
    </location>
</feature>
<feature type="strand" evidence="4">
    <location>
        <begin position="113"/>
        <end position="117"/>
    </location>
</feature>
<feature type="strand" evidence="4">
    <location>
        <begin position="127"/>
        <end position="130"/>
    </location>
</feature>
<feature type="helix" evidence="4">
    <location>
        <begin position="132"/>
        <end position="134"/>
    </location>
</feature>
<feature type="helix" evidence="4">
    <location>
        <begin position="135"/>
        <end position="164"/>
    </location>
</feature>
<proteinExistence type="evidence at protein level"/>
<keyword id="KW-0002">3D-structure</keyword>
<keyword id="KW-0010">Activator</keyword>
<keyword id="KW-0238">DNA-binding</keyword>
<keyword id="KW-0678">Repressor</keyword>
<keyword id="KW-0804">Transcription</keyword>
<keyword id="KW-0805">Transcription regulation</keyword>
<keyword id="KW-0843">Virulence</keyword>
<comment type="function">
    <text evidence="1">Global regulator with both positive and negative effects that mediates modulation of several genes involved in virulence. Also, modulates the expression of genes not previously implicated in pathogenesis (By similarity).</text>
</comment>
<comment type="similarity">
    <text evidence="3">Belongs to the rot family.</text>
</comment>
<gene>
    <name type="primary">rot</name>
    <name type="ordered locus">SAR1847</name>
</gene>
<organism>
    <name type="scientific">Staphylococcus aureus (strain MRSA252)</name>
    <dbReference type="NCBI Taxonomy" id="282458"/>
    <lineage>
        <taxon>Bacteria</taxon>
        <taxon>Bacillati</taxon>
        <taxon>Bacillota</taxon>
        <taxon>Bacilli</taxon>
        <taxon>Bacillales</taxon>
        <taxon>Staphylococcaceae</taxon>
        <taxon>Staphylococcus</taxon>
    </lineage>
</organism>
<name>ROT_STAAR</name>
<reference key="1">
    <citation type="journal article" date="2004" name="Proc. Natl. Acad. Sci. U.S.A.">
        <title>Complete genomes of two clinical Staphylococcus aureus strains: evidence for the rapid evolution of virulence and drug resistance.</title>
        <authorList>
            <person name="Holden M.T.G."/>
            <person name="Feil E.J."/>
            <person name="Lindsay J.A."/>
            <person name="Peacock S.J."/>
            <person name="Day N.P.J."/>
            <person name="Enright M.C."/>
            <person name="Foster T.J."/>
            <person name="Moore C.E."/>
            <person name="Hurst L."/>
            <person name="Atkin R."/>
            <person name="Barron A."/>
            <person name="Bason N."/>
            <person name="Bentley S.D."/>
            <person name="Chillingworth C."/>
            <person name="Chillingworth T."/>
            <person name="Churcher C."/>
            <person name="Clark L."/>
            <person name="Corton C."/>
            <person name="Cronin A."/>
            <person name="Doggett J."/>
            <person name="Dowd L."/>
            <person name="Feltwell T."/>
            <person name="Hance Z."/>
            <person name="Harris B."/>
            <person name="Hauser H."/>
            <person name="Holroyd S."/>
            <person name="Jagels K."/>
            <person name="James K.D."/>
            <person name="Lennard N."/>
            <person name="Line A."/>
            <person name="Mayes R."/>
            <person name="Moule S."/>
            <person name="Mungall K."/>
            <person name="Ormond D."/>
            <person name="Quail M.A."/>
            <person name="Rabbinowitsch E."/>
            <person name="Rutherford K.M."/>
            <person name="Sanders M."/>
            <person name="Sharp S."/>
            <person name="Simmonds M."/>
            <person name="Stevens K."/>
            <person name="Whitehead S."/>
            <person name="Barrell B.G."/>
            <person name="Spratt B.G."/>
            <person name="Parkhill J."/>
        </authorList>
    </citation>
    <scope>NUCLEOTIDE SEQUENCE [LARGE SCALE GENOMIC DNA]</scope>
    <source>
        <strain>MRSA252</strain>
    </source>
</reference>